<reference key="1">
    <citation type="journal article" date="1996" name="Nucleic Acids Res.">
        <title>Differential expression of the human ST5 gene in HeLa-fibroblast hybrid cell lines mediated by YY1: evidence that YY1 plays a part in tumor suppression.</title>
        <authorList>
            <person name="Lichy J.H."/>
            <person name="Majidi M."/>
            <person name="Elbaum J."/>
            <person name="Tsai M.M."/>
        </authorList>
    </citation>
    <scope>NUCLEOTIDE SEQUENCE [MRNA] (ISOFORMS 1; 2 AND 3)</scope>
    <scope>VARIANT GLU-399</scope>
</reference>
<reference key="2">
    <citation type="journal article" date="2001" name="Cytogenet. Cell Genet.">
        <title>Comparative genomic sequencing reveals a strikingly similar architecture of a conserved syntenic region on human chromosome 11p15.3 (including gene ST5) and mouse chromosome 7.</title>
        <authorList>
            <person name="Amid C."/>
            <person name="Bahr A."/>
            <person name="Mujica A."/>
            <person name="Sampson N."/>
            <person name="Bikar S.E."/>
            <person name="Winterpacht A."/>
            <person name="Zabel B."/>
            <person name="Hankeln T."/>
            <person name="Schmidt E.R."/>
        </authorList>
    </citation>
    <scope>NUCLEOTIDE SEQUENCE [GENOMIC DNA]</scope>
    <scope>VARIANT GLU-399</scope>
</reference>
<reference key="3">
    <citation type="journal article" date="2004" name="Nat. Genet.">
        <title>Complete sequencing and characterization of 21,243 full-length human cDNAs.</title>
        <authorList>
            <person name="Ota T."/>
            <person name="Suzuki Y."/>
            <person name="Nishikawa T."/>
            <person name="Otsuki T."/>
            <person name="Sugiyama T."/>
            <person name="Irie R."/>
            <person name="Wakamatsu A."/>
            <person name="Hayashi K."/>
            <person name="Sato H."/>
            <person name="Nagai K."/>
            <person name="Kimura K."/>
            <person name="Makita H."/>
            <person name="Sekine M."/>
            <person name="Obayashi M."/>
            <person name="Nishi T."/>
            <person name="Shibahara T."/>
            <person name="Tanaka T."/>
            <person name="Ishii S."/>
            <person name="Yamamoto J."/>
            <person name="Saito K."/>
            <person name="Kawai Y."/>
            <person name="Isono Y."/>
            <person name="Nakamura Y."/>
            <person name="Nagahari K."/>
            <person name="Murakami K."/>
            <person name="Yasuda T."/>
            <person name="Iwayanagi T."/>
            <person name="Wagatsuma M."/>
            <person name="Shiratori A."/>
            <person name="Sudo H."/>
            <person name="Hosoiri T."/>
            <person name="Kaku Y."/>
            <person name="Kodaira H."/>
            <person name="Kondo H."/>
            <person name="Sugawara M."/>
            <person name="Takahashi M."/>
            <person name="Kanda K."/>
            <person name="Yokoi T."/>
            <person name="Furuya T."/>
            <person name="Kikkawa E."/>
            <person name="Omura Y."/>
            <person name="Abe K."/>
            <person name="Kamihara K."/>
            <person name="Katsuta N."/>
            <person name="Sato K."/>
            <person name="Tanikawa M."/>
            <person name="Yamazaki M."/>
            <person name="Ninomiya K."/>
            <person name="Ishibashi T."/>
            <person name="Yamashita H."/>
            <person name="Murakawa K."/>
            <person name="Fujimori K."/>
            <person name="Tanai H."/>
            <person name="Kimata M."/>
            <person name="Watanabe M."/>
            <person name="Hiraoka S."/>
            <person name="Chiba Y."/>
            <person name="Ishida S."/>
            <person name="Ono Y."/>
            <person name="Takiguchi S."/>
            <person name="Watanabe S."/>
            <person name="Yosida M."/>
            <person name="Hotuta T."/>
            <person name="Kusano J."/>
            <person name="Kanehori K."/>
            <person name="Takahashi-Fujii A."/>
            <person name="Hara H."/>
            <person name="Tanase T.-O."/>
            <person name="Nomura Y."/>
            <person name="Togiya S."/>
            <person name="Komai F."/>
            <person name="Hara R."/>
            <person name="Takeuchi K."/>
            <person name="Arita M."/>
            <person name="Imose N."/>
            <person name="Musashino K."/>
            <person name="Yuuki H."/>
            <person name="Oshima A."/>
            <person name="Sasaki N."/>
            <person name="Aotsuka S."/>
            <person name="Yoshikawa Y."/>
            <person name="Matsunawa H."/>
            <person name="Ichihara T."/>
            <person name="Shiohata N."/>
            <person name="Sano S."/>
            <person name="Moriya S."/>
            <person name="Momiyama H."/>
            <person name="Satoh N."/>
            <person name="Takami S."/>
            <person name="Terashima Y."/>
            <person name="Suzuki O."/>
            <person name="Nakagawa S."/>
            <person name="Senoh A."/>
            <person name="Mizoguchi H."/>
            <person name="Goto Y."/>
            <person name="Shimizu F."/>
            <person name="Wakebe H."/>
            <person name="Hishigaki H."/>
            <person name="Watanabe T."/>
            <person name="Sugiyama A."/>
            <person name="Takemoto M."/>
            <person name="Kawakami B."/>
            <person name="Yamazaki M."/>
            <person name="Watanabe K."/>
            <person name="Kumagai A."/>
            <person name="Itakura S."/>
            <person name="Fukuzumi Y."/>
            <person name="Fujimori Y."/>
            <person name="Komiyama M."/>
            <person name="Tashiro H."/>
            <person name="Tanigami A."/>
            <person name="Fujiwara T."/>
            <person name="Ono T."/>
            <person name="Yamada K."/>
            <person name="Fujii Y."/>
            <person name="Ozaki K."/>
            <person name="Hirao M."/>
            <person name="Ohmori Y."/>
            <person name="Kawabata A."/>
            <person name="Hikiji T."/>
            <person name="Kobatake N."/>
            <person name="Inagaki H."/>
            <person name="Ikema Y."/>
            <person name="Okamoto S."/>
            <person name="Okitani R."/>
            <person name="Kawakami T."/>
            <person name="Noguchi S."/>
            <person name="Itoh T."/>
            <person name="Shigeta K."/>
            <person name="Senba T."/>
            <person name="Matsumura K."/>
            <person name="Nakajima Y."/>
            <person name="Mizuno T."/>
            <person name="Morinaga M."/>
            <person name="Sasaki M."/>
            <person name="Togashi T."/>
            <person name="Oyama M."/>
            <person name="Hata H."/>
            <person name="Watanabe M."/>
            <person name="Komatsu T."/>
            <person name="Mizushima-Sugano J."/>
            <person name="Satoh T."/>
            <person name="Shirai Y."/>
            <person name="Takahashi Y."/>
            <person name="Nakagawa K."/>
            <person name="Okumura K."/>
            <person name="Nagase T."/>
            <person name="Nomura N."/>
            <person name="Kikuchi H."/>
            <person name="Masuho Y."/>
            <person name="Yamashita R."/>
            <person name="Nakai K."/>
            <person name="Yada T."/>
            <person name="Nakamura Y."/>
            <person name="Ohara O."/>
            <person name="Isogai T."/>
            <person name="Sugano S."/>
        </authorList>
    </citation>
    <scope>NUCLEOTIDE SEQUENCE [LARGE SCALE MRNA] (ISOFORMS 2 AND 3)</scope>
    <source>
        <tissue>Brain</tissue>
        <tissue>Spleen</tissue>
    </source>
</reference>
<reference key="4">
    <citation type="journal article" date="2006" name="Nature">
        <title>Human chromosome 11 DNA sequence and analysis including novel gene identification.</title>
        <authorList>
            <person name="Taylor T.D."/>
            <person name="Noguchi H."/>
            <person name="Totoki Y."/>
            <person name="Toyoda A."/>
            <person name="Kuroki Y."/>
            <person name="Dewar K."/>
            <person name="Lloyd C."/>
            <person name="Itoh T."/>
            <person name="Takeda T."/>
            <person name="Kim D.-W."/>
            <person name="She X."/>
            <person name="Barlow K.F."/>
            <person name="Bloom T."/>
            <person name="Bruford E."/>
            <person name="Chang J.L."/>
            <person name="Cuomo C.A."/>
            <person name="Eichler E."/>
            <person name="FitzGerald M.G."/>
            <person name="Jaffe D.B."/>
            <person name="LaButti K."/>
            <person name="Nicol R."/>
            <person name="Park H.-S."/>
            <person name="Seaman C."/>
            <person name="Sougnez C."/>
            <person name="Yang X."/>
            <person name="Zimmer A.R."/>
            <person name="Zody M.C."/>
            <person name="Birren B.W."/>
            <person name="Nusbaum C."/>
            <person name="Fujiyama A."/>
            <person name="Hattori M."/>
            <person name="Rogers J."/>
            <person name="Lander E.S."/>
            <person name="Sakaki Y."/>
        </authorList>
    </citation>
    <scope>NUCLEOTIDE SEQUENCE [LARGE SCALE GENOMIC DNA]</scope>
</reference>
<reference key="5">
    <citation type="submission" date="2005-09" db="EMBL/GenBank/DDBJ databases">
        <authorList>
            <person name="Mural R.J."/>
            <person name="Istrail S."/>
            <person name="Sutton G.G."/>
            <person name="Florea L."/>
            <person name="Halpern A.L."/>
            <person name="Mobarry C.M."/>
            <person name="Lippert R."/>
            <person name="Walenz B."/>
            <person name="Shatkay H."/>
            <person name="Dew I."/>
            <person name="Miller J.R."/>
            <person name="Flanigan M.J."/>
            <person name="Edwards N.J."/>
            <person name="Bolanos R."/>
            <person name="Fasulo D."/>
            <person name="Halldorsson B.V."/>
            <person name="Hannenhalli S."/>
            <person name="Turner R."/>
            <person name="Yooseph S."/>
            <person name="Lu F."/>
            <person name="Nusskern D.R."/>
            <person name="Shue B.C."/>
            <person name="Zheng X.H."/>
            <person name="Zhong F."/>
            <person name="Delcher A.L."/>
            <person name="Huson D.H."/>
            <person name="Kravitz S.A."/>
            <person name="Mouchard L."/>
            <person name="Reinert K."/>
            <person name="Remington K.A."/>
            <person name="Clark A.G."/>
            <person name="Waterman M.S."/>
            <person name="Eichler E.E."/>
            <person name="Adams M.D."/>
            <person name="Hunkapiller M.W."/>
            <person name="Myers E.W."/>
            <person name="Venter J.C."/>
        </authorList>
    </citation>
    <scope>NUCLEOTIDE SEQUENCE [LARGE SCALE GENOMIC DNA]</scope>
</reference>
<reference key="6">
    <citation type="journal article" date="2004" name="Genome Res.">
        <title>The status, quality, and expansion of the NIH full-length cDNA project: the Mammalian Gene Collection (MGC).</title>
        <authorList>
            <consortium name="The MGC Project Team"/>
        </authorList>
    </citation>
    <scope>NUCLEOTIDE SEQUENCE [LARGE SCALE MRNA] (ISOFORM 1)</scope>
    <scope>VARIANTS ASN-316; THR-620 AND GLY-774</scope>
    <source>
        <tissue>Testis</tissue>
    </source>
</reference>
<reference key="7">
    <citation type="journal article" date="1992" name="Cell Growth Differ.">
        <title>Identification of a human chromosome 11 gene which is differentially regulated in tumorigenic and nontumorigenic somatic cell hybrids of HeLa cells.</title>
        <authorList>
            <person name="Lichy J.H."/>
            <person name="Modi W.S."/>
            <person name="Seuanez H.N."/>
            <person name="Howley P.M."/>
        </authorList>
    </citation>
    <scope>NUCLEOTIDE SEQUENCE [MRNA] OF 493-1137</scope>
</reference>
<reference key="8">
    <citation type="journal article" date="1998" name="J. Biol. Chem.">
        <title>Activation of extracellular signal-regulated kinase 2 by a novel Abl-binding protein, ST5.</title>
        <authorList>
            <person name="Majidi M."/>
            <person name="Hubbs A.E."/>
            <person name="Lichy J.H."/>
        </authorList>
    </citation>
    <scope>FUNCTION (ISOFORMS 1 AND 3)</scope>
    <scope>INTERACTION WITH ABL1</scope>
</reference>
<reference key="9">
    <citation type="journal article" date="1999" name="Oncogene">
        <title>Expression of an isoform of the novel signal transduction protein ST5 is linked to cell morphology.</title>
        <authorList>
            <person name="Hubbs A.E."/>
            <person name="Majidi M."/>
            <person name="Lichy J.H."/>
        </authorList>
    </citation>
    <scope>FUNCTION (ISOFORM 3)</scope>
    <scope>TISSUE SPECIFICITY</scope>
</reference>
<reference key="10">
    <citation type="journal article" date="2008" name="Proc. Natl. Acad. Sci. U.S.A.">
        <title>A quantitative atlas of mitotic phosphorylation.</title>
        <authorList>
            <person name="Dephoure N."/>
            <person name="Zhou C."/>
            <person name="Villen J."/>
            <person name="Beausoleil S.A."/>
            <person name="Bakalarski C.E."/>
            <person name="Elledge S.J."/>
            <person name="Gygi S.P."/>
        </authorList>
    </citation>
    <scope>PHOSPHORYLATION [LARGE SCALE ANALYSIS] AT SER-622</scope>
    <scope>IDENTIFICATION BY MASS SPECTROMETRY [LARGE SCALE ANALYSIS]</scope>
    <source>
        <tissue>Cervix carcinoma</tissue>
    </source>
</reference>
<reference key="11">
    <citation type="journal article" date="2010" name="J. Cell Biol.">
        <title>Family-wide characterization of the DENN domain Rab GDP-GTP exchange factors.</title>
        <authorList>
            <person name="Yoshimura S."/>
            <person name="Gerondopoulos A."/>
            <person name="Linford A."/>
            <person name="Rigden D.J."/>
            <person name="Barr F.A."/>
        </authorList>
    </citation>
    <scope>FUNCTION AS GUANYL-NUCLEOTIDE EXCHANGE FACTOR (ISOFORM 2)</scope>
</reference>
<reference key="12">
    <citation type="journal article" date="2013" name="J. Proteome Res.">
        <title>Toward a comprehensive characterization of a human cancer cell phosphoproteome.</title>
        <authorList>
            <person name="Zhou H."/>
            <person name="Di Palma S."/>
            <person name="Preisinger C."/>
            <person name="Peng M."/>
            <person name="Polat A.N."/>
            <person name="Heck A.J."/>
            <person name="Mohammed S."/>
        </authorList>
    </citation>
    <scope>PHOSPHORYLATION [LARGE SCALE ANALYSIS] AT SER-622</scope>
    <scope>IDENTIFICATION BY MASS SPECTROMETRY [LARGE SCALE ANALYSIS]</scope>
    <source>
        <tissue>Cervix carcinoma</tissue>
    </source>
</reference>
<reference key="13">
    <citation type="journal article" date="2014" name="J. Proteomics">
        <title>An enzyme assisted RP-RPLC approach for in-depth analysis of human liver phosphoproteome.</title>
        <authorList>
            <person name="Bian Y."/>
            <person name="Song C."/>
            <person name="Cheng K."/>
            <person name="Dong M."/>
            <person name="Wang F."/>
            <person name="Huang J."/>
            <person name="Sun D."/>
            <person name="Wang L."/>
            <person name="Ye M."/>
            <person name="Zou H."/>
        </authorList>
    </citation>
    <scope>PHOSPHORYLATION [LARGE SCALE ANALYSIS] AT THR-364 AND SER-368</scope>
    <scope>IDENTIFICATION BY MASS SPECTROMETRY [LARGE SCALE ANALYSIS]</scope>
    <source>
        <tissue>Liver</tissue>
    </source>
</reference>
<reference key="14">
    <citation type="journal article" date="2017" name="EMBO Rep.">
        <title>Intersectin-s interaction with DENND2B facilitates recycling of epidermal growth factor receptor.</title>
        <authorList>
            <person name="Ioannou M.S."/>
            <person name="Kulasekaran G."/>
            <person name="Fotouhi M."/>
            <person name="Morein J.J."/>
            <person name="Han C."/>
            <person name="Tse S."/>
            <person name="Nossova N."/>
            <person name="Han T."/>
            <person name="Mannard E."/>
            <person name="McPherson P.S."/>
        </authorList>
    </citation>
    <scope>FUNCTION (ISOFORM 1)</scope>
    <scope>INTERACTION WITH ITSN1 AND GRB2</scope>
    <scope>SUBCELLULAR LOCATION (ISOFORM 1)</scope>
    <scope>PHOSPHORYLATION AT SER-30</scope>
    <scope>IDENTIFICATION BY MASS SPECTROMETRY</scope>
</reference>
<evidence type="ECO:0000250" key="1">
    <source>
        <dbReference type="UniProtKB" id="Q924W7"/>
    </source>
</evidence>
<evidence type="ECO:0000255" key="2">
    <source>
        <dbReference type="PROSITE-ProRule" id="PRU00304"/>
    </source>
</evidence>
<evidence type="ECO:0000256" key="3">
    <source>
        <dbReference type="SAM" id="MobiDB-lite"/>
    </source>
</evidence>
<evidence type="ECO:0000269" key="4">
    <source>
    </source>
</evidence>
<evidence type="ECO:0000269" key="5">
    <source>
    </source>
</evidence>
<evidence type="ECO:0000269" key="6">
    <source>
    </source>
</evidence>
<evidence type="ECO:0000269" key="7">
    <source>
    </source>
</evidence>
<evidence type="ECO:0000269" key="8">
    <source>
    </source>
</evidence>
<evidence type="ECO:0000269" key="9">
    <source>
    </source>
</evidence>
<evidence type="ECO:0000269" key="10">
    <source>
    </source>
</evidence>
<evidence type="ECO:0000303" key="11">
    <source>
    </source>
</evidence>
<evidence type="ECO:0000303" key="12">
    <source>
    </source>
</evidence>
<evidence type="ECO:0000303" key="13">
    <source>
    </source>
</evidence>
<evidence type="ECO:0000305" key="14"/>
<evidence type="ECO:0000305" key="15">
    <source>
    </source>
</evidence>
<evidence type="ECO:0000305" key="16">
    <source>
    </source>
</evidence>
<evidence type="ECO:0000312" key="17">
    <source>
        <dbReference type="HGNC" id="HGNC:11350"/>
    </source>
</evidence>
<evidence type="ECO:0007744" key="18">
    <source>
    </source>
</evidence>
<evidence type="ECO:0007744" key="19">
    <source>
    </source>
</evidence>
<evidence type="ECO:0007744" key="20">
    <source>
    </source>
</evidence>
<dbReference type="EMBL" id="U15131">
    <property type="protein sequence ID" value="AAC50925.1"/>
    <property type="status" value="ALT_FRAME"/>
    <property type="molecule type" value="mRNA"/>
</dbReference>
<dbReference type="EMBL" id="U15779">
    <property type="protein sequence ID" value="AAB97097.1"/>
    <property type="molecule type" value="mRNA"/>
</dbReference>
<dbReference type="EMBL" id="U15780">
    <property type="protein sequence ID" value="AAC50926.1"/>
    <property type="molecule type" value="mRNA"/>
</dbReference>
<dbReference type="EMBL" id="AJ400879">
    <property type="protein sequence ID" value="CAC35387.1"/>
    <property type="molecule type" value="Genomic_DNA"/>
</dbReference>
<dbReference type="EMBL" id="AK127763">
    <property type="protein sequence ID" value="BAG54568.1"/>
    <property type="molecule type" value="mRNA"/>
</dbReference>
<dbReference type="EMBL" id="AK312758">
    <property type="protein sequence ID" value="BAG35624.1"/>
    <property type="molecule type" value="mRNA"/>
</dbReference>
<dbReference type="EMBL" id="AC026894">
    <property type="status" value="NOT_ANNOTATED_CDS"/>
    <property type="molecule type" value="Genomic_DNA"/>
</dbReference>
<dbReference type="EMBL" id="AC091053">
    <property type="status" value="NOT_ANNOTATED_CDS"/>
    <property type="molecule type" value="Genomic_DNA"/>
</dbReference>
<dbReference type="EMBL" id="CH471064">
    <property type="protein sequence ID" value="EAW68618.1"/>
    <property type="molecule type" value="Genomic_DNA"/>
</dbReference>
<dbReference type="EMBL" id="BC036655">
    <property type="protein sequence ID" value="AAH36655.1"/>
    <property type="molecule type" value="mRNA"/>
</dbReference>
<dbReference type="EMBL" id="S45936">
    <property type="protein sequence ID" value="AAB23647.1"/>
    <property type="molecule type" value="mRNA"/>
</dbReference>
<dbReference type="CCDS" id="CCDS7791.1">
    <molecule id="P78524-1"/>
</dbReference>
<dbReference type="CCDS" id="CCDS7792.1">
    <molecule id="P78524-2"/>
</dbReference>
<dbReference type="CCDS" id="CCDS91434.1">
    <molecule id="P78524-3"/>
</dbReference>
<dbReference type="PIR" id="A49013">
    <property type="entry name" value="A49013"/>
</dbReference>
<dbReference type="RefSeq" id="NP_001363424.1">
    <molecule id="P78524-1"/>
    <property type="nucleotide sequence ID" value="NM_001376495.1"/>
</dbReference>
<dbReference type="RefSeq" id="NP_001363425.1">
    <molecule id="P78524-1"/>
    <property type="nucleotide sequence ID" value="NM_001376496.1"/>
</dbReference>
<dbReference type="RefSeq" id="NP_001363426.1">
    <molecule id="P78524-1"/>
    <property type="nucleotide sequence ID" value="NM_001376497.1"/>
</dbReference>
<dbReference type="RefSeq" id="NP_001363430.1">
    <molecule id="P78524-2"/>
    <property type="nucleotide sequence ID" value="NM_001376501.1"/>
</dbReference>
<dbReference type="RefSeq" id="NP_001363431.1">
    <molecule id="P78524-2"/>
    <property type="nucleotide sequence ID" value="NM_001376502.1"/>
</dbReference>
<dbReference type="RefSeq" id="NP_001363434.1">
    <molecule id="P78524-3"/>
    <property type="nucleotide sequence ID" value="NM_001376505.1"/>
</dbReference>
<dbReference type="RefSeq" id="NP_001363435.1">
    <molecule id="P78524-3"/>
    <property type="nucleotide sequence ID" value="NM_001376506.1"/>
</dbReference>
<dbReference type="RefSeq" id="NP_005409.3">
    <molecule id="P78524-1"/>
    <property type="nucleotide sequence ID" value="NM_005418.3"/>
</dbReference>
<dbReference type="RefSeq" id="NP_631896.1">
    <molecule id="P78524-2"/>
    <property type="nucleotide sequence ID" value="NM_139157.3"/>
</dbReference>
<dbReference type="RefSeq" id="NP_998783.1">
    <molecule id="P78524-1"/>
    <property type="nucleotide sequence ID" value="NM_213618.2"/>
</dbReference>
<dbReference type="RefSeq" id="XP_005253140.1">
    <property type="nucleotide sequence ID" value="XM_005253083.2"/>
</dbReference>
<dbReference type="RefSeq" id="XP_011518620.1">
    <property type="nucleotide sequence ID" value="XM_011520318.1"/>
</dbReference>
<dbReference type="RefSeq" id="XP_011518631.1">
    <property type="nucleotide sequence ID" value="XM_011520329.1"/>
</dbReference>
<dbReference type="SMR" id="P78524"/>
<dbReference type="BioGRID" id="112642">
    <property type="interactions" value="28"/>
</dbReference>
<dbReference type="FunCoup" id="P78524">
    <property type="interactions" value="323"/>
</dbReference>
<dbReference type="IntAct" id="P78524">
    <property type="interactions" value="29"/>
</dbReference>
<dbReference type="MINT" id="P78524"/>
<dbReference type="STRING" id="9606.ENSP00000433528"/>
<dbReference type="GlyGen" id="P78524">
    <property type="glycosylation" value="4 sites, 1 O-linked glycan (2 sites)"/>
</dbReference>
<dbReference type="iPTMnet" id="P78524"/>
<dbReference type="PhosphoSitePlus" id="P78524"/>
<dbReference type="BioMuta" id="ST5"/>
<dbReference type="DMDM" id="317373507"/>
<dbReference type="jPOST" id="P78524"/>
<dbReference type="MassIVE" id="P78524"/>
<dbReference type="PaxDb" id="9606-ENSP00000433528"/>
<dbReference type="PeptideAtlas" id="P78524"/>
<dbReference type="ProteomicsDB" id="57631">
    <molecule id="P78524-1"/>
</dbReference>
<dbReference type="ProteomicsDB" id="57632">
    <molecule id="P78524-2"/>
</dbReference>
<dbReference type="ProteomicsDB" id="57633">
    <molecule id="P78524-3"/>
</dbReference>
<dbReference type="Antibodypedia" id="24131">
    <property type="antibodies" value="210 antibodies from 30 providers"/>
</dbReference>
<dbReference type="DNASU" id="6764"/>
<dbReference type="Ensembl" id="ENST00000313726.11">
    <molecule id="P78524-1"/>
    <property type="protein sequence ID" value="ENSP00000319678.6"/>
    <property type="gene ID" value="ENSG00000166444.19"/>
</dbReference>
<dbReference type="Ensembl" id="ENST00000526757.5">
    <molecule id="P78524-2"/>
    <property type="protein sequence ID" value="ENSP00000435097.1"/>
    <property type="gene ID" value="ENSG00000166444.19"/>
</dbReference>
<dbReference type="Ensembl" id="ENST00000530438.5">
    <molecule id="P78524-2"/>
    <property type="protein sequence ID" value="ENSP00000436802.1"/>
    <property type="gene ID" value="ENSG00000166444.19"/>
</dbReference>
<dbReference type="Ensembl" id="ENST00000530991.5">
    <molecule id="P78524-3"/>
    <property type="protein sequence ID" value="ENSP00000432887.1"/>
    <property type="gene ID" value="ENSG00000166444.19"/>
</dbReference>
<dbReference type="Ensembl" id="ENST00000534127.5">
    <molecule id="P78524-1"/>
    <property type="protein sequence ID" value="ENSP00000433528.1"/>
    <property type="gene ID" value="ENSG00000166444.19"/>
</dbReference>
<dbReference type="GeneID" id="6764"/>
<dbReference type="KEGG" id="hsa:6764"/>
<dbReference type="MANE-Select" id="ENST00000313726.11">
    <property type="protein sequence ID" value="ENSP00000319678.6"/>
    <property type="RefSeq nucleotide sequence ID" value="NM_213618.2"/>
    <property type="RefSeq protein sequence ID" value="NP_998783.1"/>
</dbReference>
<dbReference type="UCSC" id="uc001mgt.4">
    <molecule id="P78524-1"/>
    <property type="organism name" value="human"/>
</dbReference>
<dbReference type="AGR" id="HGNC:11350"/>
<dbReference type="CTD" id="6764"/>
<dbReference type="DisGeNET" id="6764"/>
<dbReference type="GeneCards" id="DENND2B"/>
<dbReference type="HGNC" id="HGNC:11350">
    <property type="gene designation" value="DENND2B"/>
</dbReference>
<dbReference type="HPA" id="ENSG00000166444">
    <property type="expression patterns" value="Low tissue specificity"/>
</dbReference>
<dbReference type="MalaCards" id="DENND2B"/>
<dbReference type="MIM" id="140750">
    <property type="type" value="gene"/>
</dbReference>
<dbReference type="neXtProt" id="NX_P78524"/>
<dbReference type="OpenTargets" id="ENSG00000166444"/>
<dbReference type="VEuPathDB" id="HostDB:ENSG00000166444"/>
<dbReference type="eggNOG" id="KOG3569">
    <property type="taxonomic scope" value="Eukaryota"/>
</dbReference>
<dbReference type="GeneTree" id="ENSGT00950000182931"/>
<dbReference type="HOGENOM" id="CLU_008960_0_0_1"/>
<dbReference type="InParanoid" id="P78524"/>
<dbReference type="OMA" id="MDKRDAG"/>
<dbReference type="OrthoDB" id="10266080at2759"/>
<dbReference type="PAN-GO" id="P78524">
    <property type="GO annotations" value="1 GO annotation based on evolutionary models"/>
</dbReference>
<dbReference type="PhylomeDB" id="P78524"/>
<dbReference type="TreeFam" id="TF320336"/>
<dbReference type="PathwayCommons" id="P78524"/>
<dbReference type="Reactome" id="R-HSA-8876198">
    <property type="pathway name" value="RAB GEFs exchange GTP for GDP on RABs"/>
</dbReference>
<dbReference type="SignaLink" id="P78524"/>
<dbReference type="BioGRID-ORCS" id="6764">
    <property type="hits" value="9 hits in 1140 CRISPR screens"/>
</dbReference>
<dbReference type="ChiTaRS" id="ST5">
    <property type="organism name" value="human"/>
</dbReference>
<dbReference type="GeneWiki" id="ST5_(gene)"/>
<dbReference type="GenomeRNAi" id="6764"/>
<dbReference type="Pharos" id="P78524">
    <property type="development level" value="Tbio"/>
</dbReference>
<dbReference type="PRO" id="PR:P78524"/>
<dbReference type="Proteomes" id="UP000005640">
    <property type="component" value="Chromosome 11"/>
</dbReference>
<dbReference type="RNAct" id="P78524">
    <property type="molecule type" value="protein"/>
</dbReference>
<dbReference type="Bgee" id="ENSG00000166444">
    <property type="expression patterns" value="Expressed in body of uterus and 188 other cell types or tissues"/>
</dbReference>
<dbReference type="ExpressionAtlas" id="P78524">
    <property type="expression patterns" value="baseline and differential"/>
</dbReference>
<dbReference type="GO" id="GO:0005938">
    <property type="term" value="C:cell cortex"/>
    <property type="evidence" value="ECO:0007669"/>
    <property type="project" value="UniProtKB-SubCell"/>
</dbReference>
<dbReference type="GO" id="GO:0005886">
    <property type="term" value="C:plasma membrane"/>
    <property type="evidence" value="ECO:0007669"/>
    <property type="project" value="UniProtKB-SubCell"/>
</dbReference>
<dbReference type="GO" id="GO:0055037">
    <property type="term" value="C:recycling endosome"/>
    <property type="evidence" value="ECO:0007669"/>
    <property type="project" value="UniProtKB-SubCell"/>
</dbReference>
<dbReference type="GO" id="GO:0005085">
    <property type="term" value="F:guanyl-nucleotide exchange factor activity"/>
    <property type="evidence" value="ECO:0000314"/>
    <property type="project" value="UniProtKB"/>
</dbReference>
<dbReference type="GO" id="GO:0070374">
    <property type="term" value="P:positive regulation of ERK1 and ERK2 cascade"/>
    <property type="evidence" value="ECO:0000314"/>
    <property type="project" value="MGI"/>
</dbReference>
<dbReference type="FunFam" id="3.30.450.200:FF:000001">
    <property type="entry name" value="DENN domain-containing protein 2A isoform X1"/>
    <property type="match status" value="1"/>
</dbReference>
<dbReference type="FunFam" id="3.40.50.11500:FF:000004">
    <property type="entry name" value="DENN domain-containing protein 2C isoform X1"/>
    <property type="match status" value="1"/>
</dbReference>
<dbReference type="Gene3D" id="3.30.450.200">
    <property type="match status" value="1"/>
</dbReference>
<dbReference type="Gene3D" id="3.40.50.11500">
    <property type="match status" value="1"/>
</dbReference>
<dbReference type="InterPro" id="IPR001194">
    <property type="entry name" value="cDENN_dom"/>
</dbReference>
<dbReference type="InterPro" id="IPR005112">
    <property type="entry name" value="dDENN_dom"/>
</dbReference>
<dbReference type="InterPro" id="IPR043153">
    <property type="entry name" value="DENN_C"/>
</dbReference>
<dbReference type="InterPro" id="IPR051942">
    <property type="entry name" value="DENN_domain_containing_2"/>
</dbReference>
<dbReference type="InterPro" id="IPR037516">
    <property type="entry name" value="Tripartite_DENN"/>
</dbReference>
<dbReference type="InterPro" id="IPR005113">
    <property type="entry name" value="uDENN_dom"/>
</dbReference>
<dbReference type="PANTHER" id="PTHR15288">
    <property type="entry name" value="DENN DOMAIN-CONTAINING PROTEIN 2"/>
    <property type="match status" value="1"/>
</dbReference>
<dbReference type="PANTHER" id="PTHR15288:SF5">
    <property type="entry name" value="DENN DOMAIN-CONTAINING PROTEIN 2B"/>
    <property type="match status" value="1"/>
</dbReference>
<dbReference type="Pfam" id="PF03455">
    <property type="entry name" value="dDENN"/>
    <property type="match status" value="1"/>
</dbReference>
<dbReference type="Pfam" id="PF02141">
    <property type="entry name" value="DENN"/>
    <property type="match status" value="1"/>
</dbReference>
<dbReference type="Pfam" id="PF03456">
    <property type="entry name" value="uDENN"/>
    <property type="match status" value="1"/>
</dbReference>
<dbReference type="SMART" id="SM00801">
    <property type="entry name" value="dDENN"/>
    <property type="match status" value="1"/>
</dbReference>
<dbReference type="SMART" id="SM00799">
    <property type="entry name" value="DENN"/>
    <property type="match status" value="1"/>
</dbReference>
<dbReference type="SMART" id="SM00800">
    <property type="entry name" value="uDENN"/>
    <property type="match status" value="1"/>
</dbReference>
<dbReference type="PROSITE" id="PS50211">
    <property type="entry name" value="DENN"/>
    <property type="match status" value="1"/>
</dbReference>
<comment type="function">
    <molecule>Isoform 1</molecule>
    <text evidence="8 10">May be involved in cytoskeletal organization and tumorogenicity. Seems to be involved in a signaling transduction pathway leading to activation of MAPK1/ERK2. Plays a role in EGFR trafficking from recycling endosomes back to the cell membrane (PubMed:29030480).</text>
</comment>
<comment type="function">
    <molecule>Isoform 2</molecule>
    <text evidence="7">Guanine nucleotide exchange factor (GEF) which may activate RAB9A and RAB9B. Promotes the exchange of GDP to GTP, converting inactive GDP-bound Rab proteins into their active GTP-bound form.</text>
</comment>
<comment type="function">
    <molecule>Isoform 3</molecule>
    <text evidence="15 16">May block ERK2 activation stimulated by ABL1 (Probable). May alter cell morphology and cell growth (Probable).</text>
</comment>
<comment type="subunit">
    <text evidence="8 10">Interacts with ITSN1 and GRB2 (PubMed:29030480). Isoform 1 interacts with the SH3 domain of ABL1.</text>
</comment>
<comment type="interaction">
    <interactant intactId="EBI-962633">
        <id>P78524</id>
    </interactant>
    <interactant intactId="EBI-466029">
        <id>P42858</id>
        <label>HTT</label>
    </interactant>
    <organismsDiffer>false</organismsDiffer>
    <experiments>3</experiments>
</comment>
<comment type="interaction">
    <interactant intactId="EBI-962633">
        <id>P78524</id>
    </interactant>
    <interactant intactId="EBI-720609">
        <id>O76024</id>
        <label>WFS1</label>
    </interactant>
    <organismsDiffer>false</organismsDiffer>
    <experiments>3</experiments>
</comment>
<comment type="subcellular location">
    <molecule>Isoform 1</molecule>
    <subcellularLocation>
        <location evidence="8">Cytoplasm</location>
        <location evidence="8">Cell cortex</location>
    </subcellularLocation>
    <subcellularLocation>
        <location evidence="8">Cell membrane</location>
    </subcellularLocation>
    <subcellularLocation>
        <location evidence="8">Recycling endosome</location>
    </subcellularLocation>
    <text evidence="8">Colocalizes with RAB13 and ITSN1 at cytoplasmic vesicles that are most likely recycling endosomes. Colocalizes with the cortical actin cytoskeleton.</text>
</comment>
<comment type="alternative products">
    <event type="alternative promoter"/>
    <event type="alternative splicing"/>
    <isoform>
        <id>P78524-1</id>
        <name>1</name>
        <name>p126</name>
        <sequence type="displayed"/>
    </isoform>
    <isoform>
        <id>P78524-2</id>
        <name>2</name>
        <name>p82</name>
        <sequence type="described" ref="VSP_019988"/>
    </isoform>
    <isoform>
        <id>P78524-3</id>
        <name>3</name>
        <name>p70</name>
        <sequence type="described" ref="VSP_019987"/>
    </isoform>
</comment>
<comment type="tissue specificity">
    <text evidence="4">Widely expressed with the exception of peripheral blood lymphocytes. Isoform 1 is expressed in several epithelial and fibroblast (including tumorigenic) but absent in lymphoid cell lines (at protein level). Isoform 3 is expressed in primary cell or weakly tumorigenic but not in tumorigenic cell lines (at protein level).</text>
</comment>
<comment type="PTM">
    <text evidence="8">Phosphorylated. Phosphorylation decreases ITSN1 binding.</text>
</comment>
<comment type="miscellaneous">
    <molecule>Isoform 1</molecule>
    <text>Produced by alternative promoter usage.</text>
</comment>
<comment type="miscellaneous">
    <molecule>Isoform 2</molecule>
    <text evidence="14">Produced by alternative splicing of isoform 1.</text>
</comment>
<comment type="miscellaneous">
    <molecule>Isoform 3</molecule>
    <text evidence="14">Produced by alternative promoter usage.</text>
</comment>
<comment type="sequence caution" evidence="14">
    <conflict type="frameshift">
        <sequence resource="EMBL-CDS" id="AAC50925"/>
    </conflict>
</comment>
<name>DEN2B_HUMAN</name>
<accession>P78524</accession>
<accession>B2R6X7</accession>
<accession>B3KXQ6</accession>
<accession>P78523</accession>
<accession>Q16492</accession>
<accession>Q7KYY2</accession>
<accession>Q7KZ12</accession>
<accession>Q8NE12</accession>
<accession>Q9BQQ6</accession>
<keyword id="KW-0877">Alternative promoter usage</keyword>
<keyword id="KW-0025">Alternative splicing</keyword>
<keyword id="KW-1003">Cell membrane</keyword>
<keyword id="KW-0963">Cytoplasm</keyword>
<keyword id="KW-0967">Endosome</keyword>
<keyword id="KW-0344">Guanine-nucleotide releasing factor</keyword>
<keyword id="KW-0472">Membrane</keyword>
<keyword id="KW-0597">Phosphoprotein</keyword>
<keyword id="KW-1267">Proteomics identification</keyword>
<keyword id="KW-1185">Reference proteome</keyword>
<proteinExistence type="evidence at protein level"/>
<protein>
    <recommendedName>
        <fullName>DENN domain-containing protein 2B</fullName>
    </recommendedName>
    <alternativeName>
        <fullName>HeLa tumor suppression 1</fullName>
    </alternativeName>
    <alternativeName>
        <fullName>Suppression of tumorigenicity 5 protein</fullName>
    </alternativeName>
</protein>
<gene>
    <name evidence="17" type="primary">DENND2B</name>
    <name type="synonym">HTS1</name>
    <name evidence="11 13" type="synonym">ST5</name>
</gene>
<sequence>MTMTANKNSSITHGAGGTKAPRGTLSRSQSVSPPPVLSPPRSPIYPLSDSETSACRYPSHSSSRVLLKDRHPPAPSPQNPQDPSPDTSPPTCPFKTASFGYLDRSPSACKRDAQKESVQGAAQDVAGVAACLPLAQSTPFPGPAAGPRGVLLTRTGTRAHSLGIREKISAWEGRREASPRMSMCGEKREGSGSEWAASEGCPSLGCPSVVPSPCSSEKTFDFKGLRRMSRTFSECSYPETEEEGEALPVRDSFYRLEKRLGRSEPSAFLRGHGSRKESSAVLSRIQKIEQVLKEQPGRGLPQLPSSCYSVDRGKRKTGTLGSLEEPAGGASVSAGSRAVGVAGVAGEAGPPPEREGSGSTKPGTPGNSPSSQRLPSKSSLDPAVNPVPKPKRTFEYEADKNPKSKPSNGLPPSPTPAAPPPLPSTPAPPVTRRPKKDMRGHRKSQSRKSFEFEDASSLQSLYPSSPTENGTENQPKFGSKSTLEENAYEDIVGDLPKENPYEDVDLKSRRAGRKSQQLSENSLDSLHRMWSPQDRKYNSPPTQLSLKPNSQSLRSGNWSERKSHRLPRLPKRHSHDDMLLLAQLSLPSSPSSLNEDSLSTTSELLSSRRARRIPKLVQRINSIYNAKRGKKRLKKLSMSSIETASLRDENSESESDSDDRFKAHTQRLVHIQSMLKRAPSYRTLELELLEWQERELFEYFVVVSLKKKPSRNTYLPEVSYQFPKLDRPTKQMREAEERLKAIPQFCFPDAKDWLPVSEYSSETFSFMLTGEDGSRRFGYCRRLLPSGKGPRLPEVYCVISRLGCFGLFSKVLDEVERRRGISAALVYPFMRSLMESPFPAPGKTIKVKTFLPGAGNEVLELRRPMDSRLEHVDFECLFTCLSVRQLIRIFASLLLERRVIFVADKLSTLSSCSHAVVALLYPFSWQHTFIPVLPASMIDIVCCPTPFLVGLLSSSLPKLKELPVEEALMVNLGSDRFIRQMDDEDTLLPRKLQAALEQALERKNELISQDSDSDSDDECNTLNGLVSEVFIRFFVETVGHYSLFLTQSEKGERAFQREAFRKSVASKSIRRFLEVFMESQMFAGFIQDRELRKCRAKGLFEQRVEQYLEELPDTEQSGMNKFLRGLGNKMKFLHKKN</sequence>
<feature type="chain" id="PRO_0000247448" description="DENN domain-containing protein 2B">
    <location>
        <begin position="1"/>
        <end position="1137"/>
    </location>
</feature>
<feature type="domain" description="uDENN" evidence="2">
    <location>
        <begin position="698"/>
        <end position="846"/>
    </location>
</feature>
<feature type="domain" description="cDENN" evidence="2">
    <location>
        <begin position="868"/>
        <end position="1001"/>
    </location>
</feature>
<feature type="domain" description="dDENN" evidence="2">
    <location>
        <begin position="1003"/>
        <end position="1096"/>
    </location>
</feature>
<feature type="region of interest" description="Disordered" evidence="3">
    <location>
        <begin position="1"/>
        <end position="99"/>
    </location>
</feature>
<feature type="region of interest" description="Disordered" evidence="3">
    <location>
        <begin position="293"/>
        <end position="573"/>
    </location>
</feature>
<feature type="region of interest" description="Interaction with ABL1" evidence="10">
    <location>
        <begin position="401"/>
        <end position="447"/>
    </location>
</feature>
<feature type="region of interest" description="Disordered" evidence="3">
    <location>
        <begin position="641"/>
        <end position="661"/>
    </location>
</feature>
<feature type="compositionally biased region" description="Polar residues" evidence="3">
    <location>
        <begin position="1"/>
        <end position="12"/>
    </location>
</feature>
<feature type="compositionally biased region" description="Pro residues" evidence="3">
    <location>
        <begin position="32"/>
        <end position="43"/>
    </location>
</feature>
<feature type="compositionally biased region" description="Polar residues" evidence="3">
    <location>
        <begin position="49"/>
        <end position="64"/>
    </location>
</feature>
<feature type="compositionally biased region" description="Pro residues" evidence="3">
    <location>
        <begin position="73"/>
        <end position="92"/>
    </location>
</feature>
<feature type="compositionally biased region" description="Low complexity" evidence="3">
    <location>
        <begin position="324"/>
        <end position="348"/>
    </location>
</feature>
<feature type="compositionally biased region" description="Low complexity" evidence="3">
    <location>
        <begin position="368"/>
        <end position="380"/>
    </location>
</feature>
<feature type="compositionally biased region" description="Basic and acidic residues" evidence="3">
    <location>
        <begin position="392"/>
        <end position="402"/>
    </location>
</feature>
<feature type="compositionally biased region" description="Pro residues" evidence="3">
    <location>
        <begin position="409"/>
        <end position="431"/>
    </location>
</feature>
<feature type="compositionally biased region" description="Basic residues" evidence="3">
    <location>
        <begin position="432"/>
        <end position="446"/>
    </location>
</feature>
<feature type="compositionally biased region" description="Polar residues" evidence="3">
    <location>
        <begin position="456"/>
        <end position="481"/>
    </location>
</feature>
<feature type="compositionally biased region" description="Basic and acidic residues" evidence="3">
    <location>
        <begin position="495"/>
        <end position="508"/>
    </location>
</feature>
<feature type="compositionally biased region" description="Polar residues" evidence="3">
    <location>
        <begin position="514"/>
        <end position="524"/>
    </location>
</feature>
<feature type="compositionally biased region" description="Polar residues" evidence="3">
    <location>
        <begin position="539"/>
        <end position="558"/>
    </location>
</feature>
<feature type="compositionally biased region" description="Basic residues" evidence="3">
    <location>
        <begin position="562"/>
        <end position="573"/>
    </location>
</feature>
<feature type="modified residue" description="Phosphoserine" evidence="8">
    <location>
        <position position="30"/>
    </location>
</feature>
<feature type="modified residue" description="Phosphoserine" evidence="1">
    <location>
        <position position="32"/>
    </location>
</feature>
<feature type="modified residue" description="Phosphothreonine" evidence="1">
    <location>
        <position position="231"/>
    </location>
</feature>
<feature type="modified residue" description="Phosphoserine" evidence="1">
    <location>
        <position position="233"/>
    </location>
</feature>
<feature type="modified residue" description="Phosphothreonine" evidence="20">
    <location>
        <position position="364"/>
    </location>
</feature>
<feature type="modified residue" description="Phosphoserine" evidence="20">
    <location>
        <position position="368"/>
    </location>
</feature>
<feature type="modified residue" description="Phosphothreonine" evidence="1">
    <location>
        <position position="482"/>
    </location>
</feature>
<feature type="modified residue" description="Phosphoserine" evidence="1">
    <location>
        <position position="545"/>
    </location>
</feature>
<feature type="modified residue" description="Phosphoserine" evidence="1">
    <location>
        <position position="574"/>
    </location>
</feature>
<feature type="modified residue" description="Phosphoserine" evidence="18 19">
    <location>
        <position position="622"/>
    </location>
</feature>
<feature type="splice variant" id="VSP_019987" description="In isoform 3." evidence="12 13">
    <location>
        <begin position="1"/>
        <end position="528"/>
    </location>
</feature>
<feature type="splice variant" id="VSP_019988" description="In isoform 2." evidence="12 13">
    <location>
        <begin position="28"/>
        <end position="447"/>
    </location>
</feature>
<feature type="sequence variant" id="VAR_027101" description="In dbSNP:rs3794153." evidence="6">
    <original>K</original>
    <variation>N</variation>
    <location>
        <position position="316"/>
    </location>
</feature>
<feature type="sequence variant" id="VAR_027102" description="In dbSNP:rs3812762." evidence="5 9">
    <original>D</original>
    <variation>E</variation>
    <location>
        <position position="399"/>
    </location>
</feature>
<feature type="sequence variant" id="VAR_027103" description="In dbSNP:rs17853683." evidence="6">
    <original>I</original>
    <variation>T</variation>
    <location>
        <position position="620"/>
    </location>
</feature>
<feature type="sequence variant" id="VAR_030642" description="In dbSNP:rs11042047.">
    <original>S</original>
    <variation>F</variation>
    <location>
        <position position="657"/>
    </location>
</feature>
<feature type="sequence variant" id="VAR_027104" description="In dbSNP:rs17853682." evidence="6">
    <original>S</original>
    <variation>G</variation>
    <location>
        <position position="774"/>
    </location>
</feature>
<feature type="sequence conflict" description="In Ref. 1; AAC50925." evidence="14" ref="1">
    <original>A</original>
    <variation>T</variation>
    <location>
        <position position="113"/>
    </location>
</feature>
<organism>
    <name type="scientific">Homo sapiens</name>
    <name type="common">Human</name>
    <dbReference type="NCBI Taxonomy" id="9606"/>
    <lineage>
        <taxon>Eukaryota</taxon>
        <taxon>Metazoa</taxon>
        <taxon>Chordata</taxon>
        <taxon>Craniata</taxon>
        <taxon>Vertebrata</taxon>
        <taxon>Euteleostomi</taxon>
        <taxon>Mammalia</taxon>
        <taxon>Eutheria</taxon>
        <taxon>Euarchontoglires</taxon>
        <taxon>Primates</taxon>
        <taxon>Haplorrhini</taxon>
        <taxon>Catarrhini</taxon>
        <taxon>Hominidae</taxon>
        <taxon>Homo</taxon>
    </lineage>
</organism>